<reference key="1">
    <citation type="journal article" date="1995" name="Cell">
        <title>IkappaB-beta regulates the persistent response in a biphasic activation of NF-kappaB.</title>
        <authorList>
            <person name="Thompson J.E."/>
            <person name="Phillips R.J."/>
            <person name="Erdjument-Bromage H."/>
            <person name="Tempst P."/>
            <person name="Ghosh S."/>
        </authorList>
    </citation>
    <scope>NUCLEOTIDE SEQUENCE [MRNA]</scope>
    <source>
        <tissue>B-cell</tissue>
    </source>
</reference>
<reference key="2">
    <citation type="journal article" date="2005" name="Science">
        <title>The transcriptional landscape of the mammalian genome.</title>
        <authorList>
            <person name="Carninci P."/>
            <person name="Kasukawa T."/>
            <person name="Katayama S."/>
            <person name="Gough J."/>
            <person name="Frith M.C."/>
            <person name="Maeda N."/>
            <person name="Oyama R."/>
            <person name="Ravasi T."/>
            <person name="Lenhard B."/>
            <person name="Wells C."/>
            <person name="Kodzius R."/>
            <person name="Shimokawa K."/>
            <person name="Bajic V.B."/>
            <person name="Brenner S.E."/>
            <person name="Batalov S."/>
            <person name="Forrest A.R."/>
            <person name="Zavolan M."/>
            <person name="Davis M.J."/>
            <person name="Wilming L.G."/>
            <person name="Aidinis V."/>
            <person name="Allen J.E."/>
            <person name="Ambesi-Impiombato A."/>
            <person name="Apweiler R."/>
            <person name="Aturaliya R.N."/>
            <person name="Bailey T.L."/>
            <person name="Bansal M."/>
            <person name="Baxter L."/>
            <person name="Beisel K.W."/>
            <person name="Bersano T."/>
            <person name="Bono H."/>
            <person name="Chalk A.M."/>
            <person name="Chiu K.P."/>
            <person name="Choudhary V."/>
            <person name="Christoffels A."/>
            <person name="Clutterbuck D.R."/>
            <person name="Crowe M.L."/>
            <person name="Dalla E."/>
            <person name="Dalrymple B.P."/>
            <person name="de Bono B."/>
            <person name="Della Gatta G."/>
            <person name="di Bernardo D."/>
            <person name="Down T."/>
            <person name="Engstrom P."/>
            <person name="Fagiolini M."/>
            <person name="Faulkner G."/>
            <person name="Fletcher C.F."/>
            <person name="Fukushima T."/>
            <person name="Furuno M."/>
            <person name="Futaki S."/>
            <person name="Gariboldi M."/>
            <person name="Georgii-Hemming P."/>
            <person name="Gingeras T.R."/>
            <person name="Gojobori T."/>
            <person name="Green R.E."/>
            <person name="Gustincich S."/>
            <person name="Harbers M."/>
            <person name="Hayashi Y."/>
            <person name="Hensch T.K."/>
            <person name="Hirokawa N."/>
            <person name="Hill D."/>
            <person name="Huminiecki L."/>
            <person name="Iacono M."/>
            <person name="Ikeo K."/>
            <person name="Iwama A."/>
            <person name="Ishikawa T."/>
            <person name="Jakt M."/>
            <person name="Kanapin A."/>
            <person name="Katoh M."/>
            <person name="Kawasawa Y."/>
            <person name="Kelso J."/>
            <person name="Kitamura H."/>
            <person name="Kitano H."/>
            <person name="Kollias G."/>
            <person name="Krishnan S.P."/>
            <person name="Kruger A."/>
            <person name="Kummerfeld S.K."/>
            <person name="Kurochkin I.V."/>
            <person name="Lareau L.F."/>
            <person name="Lazarevic D."/>
            <person name="Lipovich L."/>
            <person name="Liu J."/>
            <person name="Liuni S."/>
            <person name="McWilliam S."/>
            <person name="Madan Babu M."/>
            <person name="Madera M."/>
            <person name="Marchionni L."/>
            <person name="Matsuda H."/>
            <person name="Matsuzawa S."/>
            <person name="Miki H."/>
            <person name="Mignone F."/>
            <person name="Miyake S."/>
            <person name="Morris K."/>
            <person name="Mottagui-Tabar S."/>
            <person name="Mulder N."/>
            <person name="Nakano N."/>
            <person name="Nakauchi H."/>
            <person name="Ng P."/>
            <person name="Nilsson R."/>
            <person name="Nishiguchi S."/>
            <person name="Nishikawa S."/>
            <person name="Nori F."/>
            <person name="Ohara O."/>
            <person name="Okazaki Y."/>
            <person name="Orlando V."/>
            <person name="Pang K.C."/>
            <person name="Pavan W.J."/>
            <person name="Pavesi G."/>
            <person name="Pesole G."/>
            <person name="Petrovsky N."/>
            <person name="Piazza S."/>
            <person name="Reed J."/>
            <person name="Reid J.F."/>
            <person name="Ring B.Z."/>
            <person name="Ringwald M."/>
            <person name="Rost B."/>
            <person name="Ruan Y."/>
            <person name="Salzberg S.L."/>
            <person name="Sandelin A."/>
            <person name="Schneider C."/>
            <person name="Schoenbach C."/>
            <person name="Sekiguchi K."/>
            <person name="Semple C.A."/>
            <person name="Seno S."/>
            <person name="Sessa L."/>
            <person name="Sheng Y."/>
            <person name="Shibata Y."/>
            <person name="Shimada H."/>
            <person name="Shimada K."/>
            <person name="Silva D."/>
            <person name="Sinclair B."/>
            <person name="Sperling S."/>
            <person name="Stupka E."/>
            <person name="Sugiura K."/>
            <person name="Sultana R."/>
            <person name="Takenaka Y."/>
            <person name="Taki K."/>
            <person name="Tammoja K."/>
            <person name="Tan S.L."/>
            <person name="Tang S."/>
            <person name="Taylor M.S."/>
            <person name="Tegner J."/>
            <person name="Teichmann S.A."/>
            <person name="Ueda H.R."/>
            <person name="van Nimwegen E."/>
            <person name="Verardo R."/>
            <person name="Wei C.L."/>
            <person name="Yagi K."/>
            <person name="Yamanishi H."/>
            <person name="Zabarovsky E."/>
            <person name="Zhu S."/>
            <person name="Zimmer A."/>
            <person name="Hide W."/>
            <person name="Bult C."/>
            <person name="Grimmond S.M."/>
            <person name="Teasdale R.D."/>
            <person name="Liu E.T."/>
            <person name="Brusic V."/>
            <person name="Quackenbush J."/>
            <person name="Wahlestedt C."/>
            <person name="Mattick J.S."/>
            <person name="Hume D.A."/>
            <person name="Kai C."/>
            <person name="Sasaki D."/>
            <person name="Tomaru Y."/>
            <person name="Fukuda S."/>
            <person name="Kanamori-Katayama M."/>
            <person name="Suzuki M."/>
            <person name="Aoki J."/>
            <person name="Arakawa T."/>
            <person name="Iida J."/>
            <person name="Imamura K."/>
            <person name="Itoh M."/>
            <person name="Kato T."/>
            <person name="Kawaji H."/>
            <person name="Kawagashira N."/>
            <person name="Kawashima T."/>
            <person name="Kojima M."/>
            <person name="Kondo S."/>
            <person name="Konno H."/>
            <person name="Nakano K."/>
            <person name="Ninomiya N."/>
            <person name="Nishio T."/>
            <person name="Okada M."/>
            <person name="Plessy C."/>
            <person name="Shibata K."/>
            <person name="Shiraki T."/>
            <person name="Suzuki S."/>
            <person name="Tagami M."/>
            <person name="Waki K."/>
            <person name="Watahiki A."/>
            <person name="Okamura-Oho Y."/>
            <person name="Suzuki H."/>
            <person name="Kawai J."/>
            <person name="Hayashizaki Y."/>
        </authorList>
    </citation>
    <scope>NUCLEOTIDE SEQUENCE [LARGE SCALE MRNA]</scope>
    <source>
        <strain>C57BL/6J</strain>
        <strain>NOD</strain>
        <tissue>Hypothalamus</tissue>
        <tissue>Spleen</tissue>
        <tissue>Tongue</tissue>
    </source>
</reference>
<reference key="3">
    <citation type="submission" date="2005-09" db="EMBL/GenBank/DDBJ databases">
        <authorList>
            <person name="Mural R.J."/>
            <person name="Adams M.D."/>
            <person name="Myers E.W."/>
            <person name="Smith H.O."/>
            <person name="Venter J.C."/>
        </authorList>
    </citation>
    <scope>NUCLEOTIDE SEQUENCE [LARGE SCALE GENOMIC DNA]</scope>
</reference>
<reference key="4">
    <citation type="journal article" date="1996" name="Mol. Cell. Biol.">
        <title>Role of unphosphorylated, newly synthesized IkappaB beta in persistent activation of NF-kappaB.</title>
        <authorList>
            <person name="Suyang H."/>
            <person name="Phillips R.J."/>
            <person name="Douglas I."/>
            <person name="Ghosh S."/>
        </authorList>
    </citation>
    <scope>CHARACTERIZATION</scope>
    <scope>INTERACTION WITH RELA AND REL</scope>
</reference>
<reference key="5">
    <citation type="journal article" date="2000" name="Science">
        <title>A subclass of Ras proteins that regulate the degradation of IkappaB.</title>
        <authorList>
            <person name="Fenwick C."/>
            <person name="Na S.-Y."/>
            <person name="Voll R.E."/>
            <person name="Zhong H."/>
            <person name="Im S.-Y."/>
            <person name="Lee J.W."/>
            <person name="Ghosh S."/>
        </authorList>
    </citation>
    <scope>KAPPA B RAS-BINDING</scope>
</reference>
<reference key="6">
    <citation type="journal article" date="2010" name="Cell">
        <title>A tissue-specific atlas of mouse protein phosphorylation and expression.</title>
        <authorList>
            <person name="Huttlin E.L."/>
            <person name="Jedrychowski M.P."/>
            <person name="Elias J.E."/>
            <person name="Goswami T."/>
            <person name="Rad R."/>
            <person name="Beausoleil S.A."/>
            <person name="Villen J."/>
            <person name="Haas W."/>
            <person name="Sowa M.E."/>
            <person name="Gygi S.P."/>
        </authorList>
    </citation>
    <scope>IDENTIFICATION BY MASS SPECTROMETRY [LARGE SCALE ANALYSIS]</scope>
    <source>
        <tissue>Lung</tissue>
    </source>
</reference>
<protein>
    <recommendedName>
        <fullName>NF-kappa-B inhibitor beta</fullName>
        <shortName>NF-kappa-BIB</shortName>
    </recommendedName>
    <alternativeName>
        <fullName>I-kappa-B-beta</fullName>
        <shortName>IkB-B</shortName>
        <shortName>IkB-beta</shortName>
        <shortName>IkappaBbeta</shortName>
    </alternativeName>
</protein>
<accession>Q60778</accession>
<accession>Q564F1</accession>
<accession>Q9D6L5</accession>
<organism>
    <name type="scientific">Mus musculus</name>
    <name type="common">Mouse</name>
    <dbReference type="NCBI Taxonomy" id="10090"/>
    <lineage>
        <taxon>Eukaryota</taxon>
        <taxon>Metazoa</taxon>
        <taxon>Chordata</taxon>
        <taxon>Craniata</taxon>
        <taxon>Vertebrata</taxon>
        <taxon>Euteleostomi</taxon>
        <taxon>Mammalia</taxon>
        <taxon>Eutheria</taxon>
        <taxon>Euarchontoglires</taxon>
        <taxon>Glires</taxon>
        <taxon>Rodentia</taxon>
        <taxon>Myomorpha</taxon>
        <taxon>Muroidea</taxon>
        <taxon>Muridae</taxon>
        <taxon>Murinae</taxon>
        <taxon>Mus</taxon>
        <taxon>Mus</taxon>
    </lineage>
</organism>
<dbReference type="EMBL" id="U19799">
    <property type="protein sequence ID" value="AAC52166.1"/>
    <property type="molecule type" value="mRNA"/>
</dbReference>
<dbReference type="EMBL" id="AK010218">
    <property type="protein sequence ID" value="BAB26774.1"/>
    <property type="molecule type" value="mRNA"/>
</dbReference>
<dbReference type="EMBL" id="AK038631">
    <property type="protein sequence ID" value="BAC30071.1"/>
    <property type="molecule type" value="mRNA"/>
</dbReference>
<dbReference type="EMBL" id="AK156731">
    <property type="protein sequence ID" value="BAE33825.1"/>
    <property type="molecule type" value="mRNA"/>
</dbReference>
<dbReference type="EMBL" id="CH466593">
    <property type="protein sequence ID" value="EDL24117.1"/>
    <property type="molecule type" value="Genomic_DNA"/>
</dbReference>
<dbReference type="EMBL" id="CH466593">
    <property type="protein sequence ID" value="EDL24118.1"/>
    <property type="molecule type" value="Genomic_DNA"/>
</dbReference>
<dbReference type="CCDS" id="CCDS21054.1"/>
<dbReference type="RefSeq" id="NP_001293151.1">
    <property type="nucleotide sequence ID" value="NM_001306222.1"/>
</dbReference>
<dbReference type="RefSeq" id="NP_035038.2">
    <property type="nucleotide sequence ID" value="NM_010908.5"/>
</dbReference>
<dbReference type="PDB" id="1K3Z">
    <property type="method" value="X-ray"/>
    <property type="resolution" value="2.50 A"/>
    <property type="chains" value="D=50-331"/>
</dbReference>
<dbReference type="PDB" id="1OY3">
    <property type="method" value="X-ray"/>
    <property type="resolution" value="2.05 A"/>
    <property type="chains" value="D=50-331"/>
</dbReference>
<dbReference type="PDBsum" id="1K3Z"/>
<dbReference type="PDBsum" id="1OY3"/>
<dbReference type="SMR" id="Q60778"/>
<dbReference type="BioGRID" id="201754">
    <property type="interactions" value="4"/>
</dbReference>
<dbReference type="DIP" id="DIP-37418N"/>
<dbReference type="FunCoup" id="Q60778">
    <property type="interactions" value="731"/>
</dbReference>
<dbReference type="IntAct" id="Q60778">
    <property type="interactions" value="3"/>
</dbReference>
<dbReference type="MINT" id="Q60778"/>
<dbReference type="STRING" id="10090.ENSMUSP00000032815"/>
<dbReference type="iPTMnet" id="Q60778"/>
<dbReference type="PhosphoSitePlus" id="Q60778"/>
<dbReference type="SwissPalm" id="Q60778"/>
<dbReference type="jPOST" id="Q60778"/>
<dbReference type="PaxDb" id="10090-ENSMUSP00000032815"/>
<dbReference type="PeptideAtlas" id="Q60778"/>
<dbReference type="ProteomicsDB" id="269547"/>
<dbReference type="Pumba" id="Q60778"/>
<dbReference type="Antibodypedia" id="4179">
    <property type="antibodies" value="776 antibodies from 45 providers"/>
</dbReference>
<dbReference type="DNASU" id="18036"/>
<dbReference type="Ensembl" id="ENSMUST00000032815.11">
    <property type="protein sequence ID" value="ENSMUSP00000032815.5"/>
    <property type="gene ID" value="ENSMUSG00000030595.16"/>
</dbReference>
<dbReference type="Ensembl" id="ENSMUST00000085851.12">
    <property type="protein sequence ID" value="ENSMUSP00000083012.6"/>
    <property type="gene ID" value="ENSMUSG00000030595.16"/>
</dbReference>
<dbReference type="GeneID" id="18036"/>
<dbReference type="KEGG" id="mmu:18036"/>
<dbReference type="UCSC" id="uc009fzr.1">
    <property type="organism name" value="mouse"/>
</dbReference>
<dbReference type="AGR" id="MGI:104752"/>
<dbReference type="CTD" id="4793"/>
<dbReference type="MGI" id="MGI:104752">
    <property type="gene designation" value="Nfkbib"/>
</dbReference>
<dbReference type="VEuPathDB" id="HostDB:ENSMUSG00000030595"/>
<dbReference type="eggNOG" id="KOG0504">
    <property type="taxonomic scope" value="Eukaryota"/>
</dbReference>
<dbReference type="GeneTree" id="ENSGT00940000161595"/>
<dbReference type="HOGENOM" id="CLU_000134_6_0_1"/>
<dbReference type="InParanoid" id="Q60778"/>
<dbReference type="OMA" id="REGWRDC"/>
<dbReference type="OrthoDB" id="20727at2759"/>
<dbReference type="PhylomeDB" id="Q60778"/>
<dbReference type="TreeFam" id="TF320166"/>
<dbReference type="Reactome" id="R-MMU-1169091">
    <property type="pathway name" value="Activation of NF-kappaB in B cells"/>
</dbReference>
<dbReference type="Reactome" id="R-MMU-1810476">
    <property type="pathway name" value="RIP-mediated NFkB activation via ZBP1"/>
</dbReference>
<dbReference type="Reactome" id="R-MMU-445989">
    <property type="pathway name" value="TAK1-dependent IKK and NF-kappa-B activation"/>
</dbReference>
<dbReference type="Reactome" id="R-MMU-933542">
    <property type="pathway name" value="TRAF6 mediated NF-kB activation"/>
</dbReference>
<dbReference type="BioGRID-ORCS" id="18036">
    <property type="hits" value="6 hits in 77 CRISPR screens"/>
</dbReference>
<dbReference type="EvolutionaryTrace" id="Q60778"/>
<dbReference type="PRO" id="PR:Q60778"/>
<dbReference type="Proteomes" id="UP000000589">
    <property type="component" value="Chromosome 7"/>
</dbReference>
<dbReference type="RNAct" id="Q60778">
    <property type="molecule type" value="protein"/>
</dbReference>
<dbReference type="Bgee" id="ENSMUSG00000030595">
    <property type="expression patterns" value="Expressed in seminiferous tubule of testis and 247 other cell types or tissues"/>
</dbReference>
<dbReference type="ExpressionAtlas" id="Q60778">
    <property type="expression patterns" value="baseline and differential"/>
</dbReference>
<dbReference type="GO" id="GO:0005737">
    <property type="term" value="C:cytoplasm"/>
    <property type="evidence" value="ECO:0007669"/>
    <property type="project" value="UniProtKB-SubCell"/>
</dbReference>
<dbReference type="GO" id="GO:0005634">
    <property type="term" value="C:nucleus"/>
    <property type="evidence" value="ECO:0007669"/>
    <property type="project" value="UniProtKB-SubCell"/>
</dbReference>
<dbReference type="GO" id="GO:0071222">
    <property type="term" value="P:cellular response to lipopolysaccharide"/>
    <property type="evidence" value="ECO:0000314"/>
    <property type="project" value="MGI"/>
</dbReference>
<dbReference type="GO" id="GO:0006954">
    <property type="term" value="P:inflammatory response"/>
    <property type="evidence" value="ECO:0000316"/>
    <property type="project" value="MGI"/>
</dbReference>
<dbReference type="GO" id="GO:0043122">
    <property type="term" value="P:regulation of canonical NF-kappaB signal transduction"/>
    <property type="evidence" value="ECO:0000316"/>
    <property type="project" value="MGI"/>
</dbReference>
<dbReference type="Gene3D" id="1.25.40.20">
    <property type="entry name" value="Ankyrin repeat-containing domain"/>
    <property type="match status" value="1"/>
</dbReference>
<dbReference type="InterPro" id="IPR002110">
    <property type="entry name" value="Ankyrin_rpt"/>
</dbReference>
<dbReference type="InterPro" id="IPR036770">
    <property type="entry name" value="Ankyrin_rpt-contain_sf"/>
</dbReference>
<dbReference type="PANTHER" id="PTHR47303">
    <property type="match status" value="1"/>
</dbReference>
<dbReference type="PANTHER" id="PTHR47303:SF1">
    <property type="entry name" value="NF-KAPPA-B INHIBITOR BETA"/>
    <property type="match status" value="1"/>
</dbReference>
<dbReference type="Pfam" id="PF00023">
    <property type="entry name" value="Ank"/>
    <property type="match status" value="1"/>
</dbReference>
<dbReference type="Pfam" id="PF12796">
    <property type="entry name" value="Ank_2"/>
    <property type="match status" value="2"/>
</dbReference>
<dbReference type="PRINTS" id="PR01415">
    <property type="entry name" value="ANKYRIN"/>
</dbReference>
<dbReference type="SMART" id="SM00248">
    <property type="entry name" value="ANK"/>
    <property type="match status" value="6"/>
</dbReference>
<dbReference type="SUPFAM" id="SSF48403">
    <property type="entry name" value="Ankyrin repeat"/>
    <property type="match status" value="1"/>
</dbReference>
<dbReference type="PROSITE" id="PS50297">
    <property type="entry name" value="ANK_REP_REGION"/>
    <property type="match status" value="1"/>
</dbReference>
<dbReference type="PROSITE" id="PS50088">
    <property type="entry name" value="ANK_REPEAT"/>
    <property type="match status" value="4"/>
</dbReference>
<feature type="chain" id="PRO_0000067005" description="NF-kappa-B inhibitor beta">
    <location>
        <begin position="1"/>
        <end position="359"/>
    </location>
</feature>
<feature type="repeat" description="ANK 1">
    <location>
        <begin position="57"/>
        <end position="86"/>
    </location>
</feature>
<feature type="repeat" description="ANK 2">
    <location>
        <begin position="93"/>
        <end position="122"/>
    </location>
</feature>
<feature type="repeat" description="ANK 3">
    <location>
        <begin position="126"/>
        <end position="155"/>
    </location>
</feature>
<feature type="repeat" description="ANK 4">
    <location>
        <begin position="206"/>
        <end position="235"/>
    </location>
</feature>
<feature type="repeat" description="ANK 5">
    <location>
        <begin position="240"/>
        <end position="269"/>
    </location>
</feature>
<feature type="repeat" description="ANK 6">
    <location>
        <begin position="273"/>
        <end position="302"/>
    </location>
</feature>
<feature type="region of interest" description="Disordered" evidence="2">
    <location>
        <begin position="153"/>
        <end position="194"/>
    </location>
</feature>
<feature type="region of interest" description="Disordered" evidence="2">
    <location>
        <begin position="298"/>
        <end position="359"/>
    </location>
</feature>
<feature type="compositionally biased region" description="Polar residues" evidence="2">
    <location>
        <begin position="160"/>
        <end position="172"/>
    </location>
</feature>
<feature type="compositionally biased region" description="Acidic residues" evidence="2">
    <location>
        <begin position="318"/>
        <end position="331"/>
    </location>
</feature>
<feature type="compositionally biased region" description="Pro residues" evidence="2">
    <location>
        <begin position="344"/>
        <end position="359"/>
    </location>
</feature>
<feature type="modified residue" description="Phosphoserine; by RPS6KA1" evidence="1">
    <location>
        <position position="19"/>
    </location>
</feature>
<feature type="modified residue" description="Phosphoserine; by RPS6KA1" evidence="1">
    <location>
        <position position="23"/>
    </location>
</feature>
<feature type="modified residue" description="Phosphoserine" evidence="1">
    <location>
        <position position="313"/>
    </location>
</feature>
<feature type="modified residue" description="Phosphoserine" evidence="1">
    <location>
        <position position="318"/>
    </location>
</feature>
<feature type="sequence conflict" description="In Ref. 1; AAC52166." evidence="5" ref="1">
    <original>T</original>
    <variation>H</variation>
    <location>
        <position position="84"/>
    </location>
</feature>
<feature type="helix" evidence="7">
    <location>
        <begin position="61"/>
        <end position="67"/>
    </location>
</feature>
<feature type="helix" evidence="7">
    <location>
        <begin position="71"/>
        <end position="81"/>
    </location>
</feature>
<feature type="helix" evidence="7">
    <location>
        <begin position="85"/>
        <end position="88"/>
    </location>
</feature>
<feature type="helix" evidence="7">
    <location>
        <begin position="97"/>
        <end position="104"/>
    </location>
</feature>
<feature type="helix" evidence="7">
    <location>
        <begin position="107"/>
        <end position="115"/>
    </location>
</feature>
<feature type="helix" evidence="7">
    <location>
        <begin position="130"/>
        <end position="134"/>
    </location>
</feature>
<feature type="turn" evidence="7">
    <location>
        <begin position="135"/>
        <end position="138"/>
    </location>
</feature>
<feature type="helix" evidence="7">
    <location>
        <begin position="140"/>
        <end position="146"/>
    </location>
</feature>
<feature type="strand" evidence="7">
    <location>
        <begin position="147"/>
        <end position="149"/>
    </location>
</feature>
<feature type="helix" evidence="7">
    <location>
        <begin position="196"/>
        <end position="199"/>
    </location>
</feature>
<feature type="helix" evidence="7">
    <location>
        <begin position="210"/>
        <end position="216"/>
    </location>
</feature>
<feature type="helix" evidence="7">
    <location>
        <begin position="220"/>
        <end position="229"/>
    </location>
</feature>
<feature type="turn" evidence="7">
    <location>
        <begin position="238"/>
        <end position="240"/>
    </location>
</feature>
<feature type="helix" evidence="7">
    <location>
        <begin position="244"/>
        <end position="250"/>
    </location>
</feature>
<feature type="helix" evidence="7">
    <location>
        <begin position="254"/>
        <end position="262"/>
    </location>
</feature>
<feature type="helix" evidence="7">
    <location>
        <begin position="277"/>
        <end position="282"/>
    </location>
</feature>
<feature type="helix" evidence="7">
    <location>
        <begin position="287"/>
        <end position="295"/>
    </location>
</feature>
<feature type="helix" evidence="6">
    <location>
        <begin position="304"/>
        <end position="307"/>
    </location>
</feature>
<name>IKBB_MOUSE</name>
<evidence type="ECO:0000250" key="1">
    <source>
        <dbReference type="UniProtKB" id="Q15653"/>
    </source>
</evidence>
<evidence type="ECO:0000256" key="2">
    <source>
        <dbReference type="SAM" id="MobiDB-lite"/>
    </source>
</evidence>
<evidence type="ECO:0000269" key="3">
    <source>
    </source>
</evidence>
<evidence type="ECO:0000269" key="4">
    <source>
    </source>
</evidence>
<evidence type="ECO:0000305" key="5"/>
<evidence type="ECO:0007829" key="6">
    <source>
        <dbReference type="PDB" id="1K3Z"/>
    </source>
</evidence>
<evidence type="ECO:0007829" key="7">
    <source>
        <dbReference type="PDB" id="1OY3"/>
    </source>
</evidence>
<gene>
    <name type="primary">Nfkbib</name>
    <name type="synonym">Ikbb</name>
</gene>
<comment type="function">
    <text>Inhibits NF-kappa-B by complexing with and trapping it in the cytoplasm. However, the unphosphorylated form resynthesized after cell stimulation is able to bind NF-kappa-B allowing its transport to the nucleus and protecting it to further NFKBIA-dependent inactivation. Association with inhibitor kappa B-interacting NKIRAS1 and NKIRAS2 prevent its phosphorylation rendering it more resistant to degradation, explaining its slower degradation.</text>
</comment>
<comment type="subunit">
    <text evidence="1 3 4">Interacts with THRB (via ligand-binding domain) (By similarity). Interacts with RELA and REL (PubMed:8816457). Interacts with COMMD1 (By similarity). Interacts with inhibitor kappa B-interacting Ras-like NKIRAS1 and NKIRAS2 (PubMed:10657303).</text>
</comment>
<comment type="interaction">
    <interactant intactId="EBI-644469">
        <id>Q60778</id>
    </interactant>
    <interactant intactId="EBI-6861719">
        <id>Q9Z1K6</id>
        <label>Arih2</label>
    </interactant>
    <organismsDiffer>false</organismsDiffer>
    <experiments>2</experiments>
</comment>
<comment type="interaction">
    <interactant intactId="EBI-644469">
        <id>Q60778</id>
    </interactant>
    <interactant intactId="EBI-5323778">
        <id>P15307</id>
        <label>Rel</label>
    </interactant>
    <organismsDiffer>false</organismsDiffer>
    <experiments>5</experiments>
</comment>
<comment type="interaction">
    <interactant intactId="EBI-644469">
        <id>Q60778</id>
    </interactant>
    <interactant intactId="EBI-644400">
        <id>Q04207</id>
        <label>Rela</label>
    </interactant>
    <organismsDiffer>false</organismsDiffer>
    <experiments>12</experiments>
</comment>
<comment type="subcellular location">
    <subcellularLocation>
        <location>Cytoplasm</location>
    </subcellularLocation>
    <subcellularLocation>
        <location>Nucleus</location>
    </subcellularLocation>
</comment>
<comment type="tissue specificity">
    <text>Highly expressed in testis followed by spleen.</text>
</comment>
<comment type="PTM">
    <text>Phosphorylated by RPS6KA1; followed by degradation. Interaction with NKIRAS1 and NKIRAS2 probably prevents phosphorylation.</text>
</comment>
<comment type="similarity">
    <text evidence="5">Belongs to the NF-kappa-B inhibitor family.</text>
</comment>
<sequence length="359" mass="37965">MAGVACLGKTADADEWCDSGLGSLGPDAAAPGGPGLGAELGPELSWAPLVFGYVTEDGDTALHLAVIHQHEPFLDFLLGFSAGTEYLDLQNDLGQTALHLAAILGEASTVEKLYAAGAGVLVAERGGHTALHLACRVRAHTCACVLLQPRPSHPRDASDTYLTQSQDCTPDTSHAPAAVDSQPNPENEEEPRDEDWRLQLEAENYDGHTPLHVAVIHKDAEMVRLLRDAGADLNKPEPTCGRTPLHLAVEAQAASVLELLLKAGADPTARMYGGRTPLGSALLRPNPILARLLRAHGAPEPEDEDDKLSPCSSSGSDSDSDNRDEGDEYDDIVVHSGRSQNRQPPSPASKPLPDDPNPA</sequence>
<proteinExistence type="evidence at protein level"/>
<keyword id="KW-0002">3D-structure</keyword>
<keyword id="KW-0040">ANK repeat</keyword>
<keyword id="KW-0963">Cytoplasm</keyword>
<keyword id="KW-0539">Nucleus</keyword>
<keyword id="KW-0597">Phosphoprotein</keyword>
<keyword id="KW-1185">Reference proteome</keyword>
<keyword id="KW-0677">Repeat</keyword>